<evidence type="ECO:0000250" key="1">
    <source>
        <dbReference type="UniProtKB" id="Q86PC9"/>
    </source>
</evidence>
<evidence type="ECO:0000255" key="2"/>
<evidence type="ECO:0000256" key="3">
    <source>
        <dbReference type="SAM" id="MobiDB-lite"/>
    </source>
</evidence>
<evidence type="ECO:0000312" key="4">
    <source>
        <dbReference type="EMBL" id="EDX08014.1"/>
    </source>
</evidence>
<feature type="chain" id="PRO_0000400843" description="Protein king tubby">
    <location>
        <begin position="1"/>
        <end position="443"/>
    </location>
</feature>
<feature type="region of interest" description="Disordered" evidence="3">
    <location>
        <begin position="57"/>
        <end position="80"/>
    </location>
</feature>
<feature type="region of interest" description="Disordered" evidence="3">
    <location>
        <begin position="98"/>
        <end position="191"/>
    </location>
</feature>
<feature type="compositionally biased region" description="Polar residues" evidence="3">
    <location>
        <begin position="68"/>
        <end position="80"/>
    </location>
</feature>
<feature type="compositionally biased region" description="Low complexity" evidence="3">
    <location>
        <begin position="113"/>
        <end position="128"/>
    </location>
</feature>
<feature type="compositionally biased region" description="Gly residues" evidence="3">
    <location>
        <begin position="177"/>
        <end position="186"/>
    </location>
</feature>
<feature type="modified residue" description="Phosphoserine" evidence="1">
    <location>
        <position position="136"/>
    </location>
</feature>
<reference evidence="4" key="1">
    <citation type="journal article" date="2007" name="Nature">
        <title>Evolution of genes and genomes on the Drosophila phylogeny.</title>
        <authorList>
            <consortium name="Drosophila 12 genomes consortium"/>
        </authorList>
    </citation>
    <scope>NUCLEOTIDE SEQUENCE [LARGE SCALE GENOMIC DNA]</scope>
</reference>
<proteinExistence type="inferred from homology"/>
<organism>
    <name type="scientific">Drosophila simulans</name>
    <name type="common">Fruit fly</name>
    <dbReference type="NCBI Taxonomy" id="7240"/>
    <lineage>
        <taxon>Eukaryota</taxon>
        <taxon>Metazoa</taxon>
        <taxon>Ecdysozoa</taxon>
        <taxon>Arthropoda</taxon>
        <taxon>Hexapoda</taxon>
        <taxon>Insecta</taxon>
        <taxon>Pterygota</taxon>
        <taxon>Neoptera</taxon>
        <taxon>Endopterygota</taxon>
        <taxon>Diptera</taxon>
        <taxon>Brachycera</taxon>
        <taxon>Muscomorpha</taxon>
        <taxon>Ephydroidea</taxon>
        <taxon>Drosophilidae</taxon>
        <taxon>Drosophila</taxon>
        <taxon>Sophophora</taxon>
    </lineage>
</organism>
<gene>
    <name evidence="1" type="primary">king-tubby</name>
    <name type="ORF">GD11564</name>
</gene>
<keyword id="KW-1003">Cell membrane</keyword>
<keyword id="KW-0966">Cell projection</keyword>
<keyword id="KW-0963">Cytoplasm</keyword>
<keyword id="KW-0472">Membrane</keyword>
<keyword id="KW-0539">Nucleus</keyword>
<keyword id="KW-0597">Phosphoprotein</keyword>
<keyword id="KW-1185">Reference proteome</keyword>
<name>TULP_DROSI</name>
<comment type="subcellular location">
    <subcellularLocation>
        <location evidence="1">Cytoplasm</location>
    </subcellularLocation>
    <subcellularLocation>
        <location evidence="1">Nucleus</location>
    </subcellularLocation>
    <subcellularLocation>
        <location evidence="1">Cell projection</location>
        <location evidence="1">Cilium membrane</location>
        <topology evidence="1">Peripheral membrane protein</topology>
    </subcellularLocation>
    <subcellularLocation>
        <location evidence="1">Cell projection</location>
        <location evidence="1">Rhabdomere</location>
    </subcellularLocation>
</comment>
<comment type="similarity">
    <text evidence="2">Belongs to the TUB family.</text>
</comment>
<dbReference type="EMBL" id="CM000362">
    <property type="protein sequence ID" value="EDX08014.1"/>
    <property type="molecule type" value="Genomic_DNA"/>
</dbReference>
<dbReference type="RefSeq" id="XP_016028825.1">
    <property type="nucleotide sequence ID" value="XM_016168622.1"/>
</dbReference>
<dbReference type="RefSeq" id="XP_016028827.1">
    <property type="nucleotide sequence ID" value="XM_016168624.1"/>
</dbReference>
<dbReference type="SMR" id="B4QFM2"/>
<dbReference type="STRING" id="7240.B4QFM2"/>
<dbReference type="EnsemblMetazoa" id="FBtr0211474">
    <property type="protein sequence ID" value="FBpp0209966"/>
    <property type="gene ID" value="FBgn0183305"/>
</dbReference>
<dbReference type="EnsemblMetazoa" id="FBtr0358083">
    <property type="protein sequence ID" value="FBpp0322118"/>
    <property type="gene ID" value="FBgn0183305"/>
</dbReference>
<dbReference type="EnsemblMetazoa" id="XM_016168623.2">
    <property type="protein sequence ID" value="XP_016028826.1"/>
    <property type="gene ID" value="LOC6735490"/>
</dbReference>
<dbReference type="HOGENOM" id="CLU_028236_1_1_1"/>
<dbReference type="OMA" id="GYDGPMQ"/>
<dbReference type="OrthoDB" id="8775810at2759"/>
<dbReference type="PhylomeDB" id="B4QFM2"/>
<dbReference type="ChiTaRS" id="ktub">
    <property type="organism name" value="fly"/>
</dbReference>
<dbReference type="Proteomes" id="UP000000304">
    <property type="component" value="Chromosome 2R"/>
</dbReference>
<dbReference type="Bgee" id="FBgn0183305">
    <property type="expression patterns" value="Expressed in embryo and 3 other cell types or tissues"/>
</dbReference>
<dbReference type="GO" id="GO:0060170">
    <property type="term" value="C:ciliary membrane"/>
    <property type="evidence" value="ECO:0007669"/>
    <property type="project" value="UniProtKB-SubCell"/>
</dbReference>
<dbReference type="GO" id="GO:0005737">
    <property type="term" value="C:cytoplasm"/>
    <property type="evidence" value="ECO:0000250"/>
    <property type="project" value="UniProtKB"/>
</dbReference>
<dbReference type="GO" id="GO:0005634">
    <property type="term" value="C:nucleus"/>
    <property type="evidence" value="ECO:0000250"/>
    <property type="project" value="UniProtKB"/>
</dbReference>
<dbReference type="GO" id="GO:0016028">
    <property type="term" value="C:rhabdomere"/>
    <property type="evidence" value="ECO:0007669"/>
    <property type="project" value="UniProtKB-SubCell"/>
</dbReference>
<dbReference type="GO" id="GO:0061512">
    <property type="term" value="P:protein localization to cilium"/>
    <property type="evidence" value="ECO:0007669"/>
    <property type="project" value="TreeGrafter"/>
</dbReference>
<dbReference type="FunFam" id="3.20.90.10:FF:000001">
    <property type="entry name" value="Tubby-like protein"/>
    <property type="match status" value="1"/>
</dbReference>
<dbReference type="Gene3D" id="3.20.90.10">
    <property type="entry name" value="Tubby Protein, Chain A"/>
    <property type="match status" value="1"/>
</dbReference>
<dbReference type="InterPro" id="IPR025659">
    <property type="entry name" value="Tubby-like_C"/>
</dbReference>
<dbReference type="InterPro" id="IPR000007">
    <property type="entry name" value="Tubby_C"/>
</dbReference>
<dbReference type="InterPro" id="IPR018066">
    <property type="entry name" value="Tubby_C_CS"/>
</dbReference>
<dbReference type="PANTHER" id="PTHR16517:SF7">
    <property type="entry name" value="PROTEIN KING TUBBY"/>
    <property type="match status" value="1"/>
</dbReference>
<dbReference type="PANTHER" id="PTHR16517">
    <property type="entry name" value="TUBBY-RELATED"/>
    <property type="match status" value="1"/>
</dbReference>
<dbReference type="Pfam" id="PF01167">
    <property type="entry name" value="Tub"/>
    <property type="match status" value="1"/>
</dbReference>
<dbReference type="PRINTS" id="PR01573">
    <property type="entry name" value="SUPERTUBBY"/>
</dbReference>
<dbReference type="SUPFAM" id="SSF54518">
    <property type="entry name" value="Tubby C-terminal domain-like"/>
    <property type="match status" value="1"/>
</dbReference>
<dbReference type="PROSITE" id="PS01200">
    <property type="entry name" value="TUB_1"/>
    <property type="match status" value="1"/>
</dbReference>
<dbReference type="PROSITE" id="PS01201">
    <property type="entry name" value="TUB_2"/>
    <property type="match status" value="1"/>
</dbReference>
<protein>
    <recommendedName>
        <fullName evidence="1">Protein king tubby</fullName>
    </recommendedName>
</protein>
<sequence>MEAYIRQKRASPGMVQASDLQINRPMSGMRSNSRELHAYDGPMQFISSPQNPDQILTNGSPGGINPVAMNTSRNHSNNMRSLSTINQEADLIEEISSHELEDEESSPVTVIEQHQQSASHSANSTQSQKPRARQHSFSDNLDEDDYTNRNVAGAAPVRPAGMASSPYKDATLDGSSNGTGNGTGGESEGDVIGNIDQFVMQPAPQGVLYKCRITRDRKGMDRGLFPIYYLHLERDYGKKIFLLGGRKRKKSKTSNYIVSCDPTDLSRNADGFCGKLRSNVFGTSFTVFDNGNKESTESPRLDLAVIIYDTNILGFKGPRNMTVILPGMTEDDQRVKISSADPKQQGILDLWKMKNMDNIVELHNKTPVWNDETQSYVLNFHGRVTQASVKNFQLVHDSDPEYIVMQFGRTSEDVFTMDYRYPLCAMQAFAIALSSFDGKIACE</sequence>
<accession>B4QFM2</accession>